<proteinExistence type="inferred from homology"/>
<name>SYP_ANASK</name>
<accession>B4UGI0</accession>
<feature type="chain" id="PRO_1000199350" description="Proline--tRNA ligase">
    <location>
        <begin position="1"/>
        <end position="574"/>
    </location>
</feature>
<dbReference type="EC" id="6.1.1.15" evidence="1"/>
<dbReference type="EMBL" id="CP001131">
    <property type="protein sequence ID" value="ACG75262.1"/>
    <property type="molecule type" value="Genomic_DNA"/>
</dbReference>
<dbReference type="RefSeq" id="WP_012528015.1">
    <property type="nucleotide sequence ID" value="NC_011145.1"/>
</dbReference>
<dbReference type="SMR" id="B4UGI0"/>
<dbReference type="KEGG" id="ank:AnaeK_4057"/>
<dbReference type="HOGENOM" id="CLU_016739_0_0_7"/>
<dbReference type="OrthoDB" id="9809052at2"/>
<dbReference type="Proteomes" id="UP000001871">
    <property type="component" value="Chromosome"/>
</dbReference>
<dbReference type="GO" id="GO:0005829">
    <property type="term" value="C:cytosol"/>
    <property type="evidence" value="ECO:0007669"/>
    <property type="project" value="TreeGrafter"/>
</dbReference>
<dbReference type="GO" id="GO:0002161">
    <property type="term" value="F:aminoacyl-tRNA deacylase activity"/>
    <property type="evidence" value="ECO:0007669"/>
    <property type="project" value="InterPro"/>
</dbReference>
<dbReference type="GO" id="GO:0005524">
    <property type="term" value="F:ATP binding"/>
    <property type="evidence" value="ECO:0007669"/>
    <property type="project" value="UniProtKB-UniRule"/>
</dbReference>
<dbReference type="GO" id="GO:0004827">
    <property type="term" value="F:proline-tRNA ligase activity"/>
    <property type="evidence" value="ECO:0007669"/>
    <property type="project" value="UniProtKB-UniRule"/>
</dbReference>
<dbReference type="GO" id="GO:0006433">
    <property type="term" value="P:prolyl-tRNA aminoacylation"/>
    <property type="evidence" value="ECO:0007669"/>
    <property type="project" value="UniProtKB-UniRule"/>
</dbReference>
<dbReference type="CDD" id="cd04334">
    <property type="entry name" value="ProRS-INS"/>
    <property type="match status" value="1"/>
</dbReference>
<dbReference type="CDD" id="cd00861">
    <property type="entry name" value="ProRS_anticodon_short"/>
    <property type="match status" value="1"/>
</dbReference>
<dbReference type="CDD" id="cd00779">
    <property type="entry name" value="ProRS_core_prok"/>
    <property type="match status" value="1"/>
</dbReference>
<dbReference type="FunFam" id="3.30.930.10:FF:000066">
    <property type="entry name" value="Proline--tRNA ligase"/>
    <property type="match status" value="1"/>
</dbReference>
<dbReference type="Gene3D" id="3.40.50.800">
    <property type="entry name" value="Anticodon-binding domain"/>
    <property type="match status" value="1"/>
</dbReference>
<dbReference type="Gene3D" id="3.30.930.10">
    <property type="entry name" value="Bira Bifunctional Protein, Domain 2"/>
    <property type="match status" value="2"/>
</dbReference>
<dbReference type="Gene3D" id="3.90.960.10">
    <property type="entry name" value="YbaK/aminoacyl-tRNA synthetase-associated domain"/>
    <property type="match status" value="1"/>
</dbReference>
<dbReference type="HAMAP" id="MF_01569">
    <property type="entry name" value="Pro_tRNA_synth_type1"/>
    <property type="match status" value="1"/>
</dbReference>
<dbReference type="InterPro" id="IPR002314">
    <property type="entry name" value="aa-tRNA-synt_IIb"/>
</dbReference>
<dbReference type="InterPro" id="IPR006195">
    <property type="entry name" value="aa-tRNA-synth_II"/>
</dbReference>
<dbReference type="InterPro" id="IPR045864">
    <property type="entry name" value="aa-tRNA-synth_II/BPL/LPL"/>
</dbReference>
<dbReference type="InterPro" id="IPR004154">
    <property type="entry name" value="Anticodon-bd"/>
</dbReference>
<dbReference type="InterPro" id="IPR036621">
    <property type="entry name" value="Anticodon-bd_dom_sf"/>
</dbReference>
<dbReference type="InterPro" id="IPR002316">
    <property type="entry name" value="Pro-tRNA-ligase_IIa"/>
</dbReference>
<dbReference type="InterPro" id="IPR004500">
    <property type="entry name" value="Pro-tRNA-synth_IIa_bac-type"/>
</dbReference>
<dbReference type="InterPro" id="IPR023717">
    <property type="entry name" value="Pro-tRNA-Synthase_IIa_type1"/>
</dbReference>
<dbReference type="InterPro" id="IPR050062">
    <property type="entry name" value="Pro-tRNA_synthetase"/>
</dbReference>
<dbReference type="InterPro" id="IPR044140">
    <property type="entry name" value="ProRS_anticodon_short"/>
</dbReference>
<dbReference type="InterPro" id="IPR033730">
    <property type="entry name" value="ProRS_core_prok"/>
</dbReference>
<dbReference type="InterPro" id="IPR036754">
    <property type="entry name" value="YbaK/aa-tRNA-synt-asso_dom_sf"/>
</dbReference>
<dbReference type="InterPro" id="IPR007214">
    <property type="entry name" value="YbaK/aa-tRNA-synth-assoc-dom"/>
</dbReference>
<dbReference type="NCBIfam" id="NF006625">
    <property type="entry name" value="PRK09194.1"/>
    <property type="match status" value="1"/>
</dbReference>
<dbReference type="NCBIfam" id="TIGR00409">
    <property type="entry name" value="proS_fam_II"/>
    <property type="match status" value="1"/>
</dbReference>
<dbReference type="PANTHER" id="PTHR42753">
    <property type="entry name" value="MITOCHONDRIAL RIBOSOME PROTEIN L39/PROLYL-TRNA LIGASE FAMILY MEMBER"/>
    <property type="match status" value="1"/>
</dbReference>
<dbReference type="PANTHER" id="PTHR42753:SF2">
    <property type="entry name" value="PROLINE--TRNA LIGASE"/>
    <property type="match status" value="1"/>
</dbReference>
<dbReference type="Pfam" id="PF03129">
    <property type="entry name" value="HGTP_anticodon"/>
    <property type="match status" value="1"/>
</dbReference>
<dbReference type="Pfam" id="PF00587">
    <property type="entry name" value="tRNA-synt_2b"/>
    <property type="match status" value="1"/>
</dbReference>
<dbReference type="Pfam" id="PF04073">
    <property type="entry name" value="tRNA_edit"/>
    <property type="match status" value="1"/>
</dbReference>
<dbReference type="PRINTS" id="PR01046">
    <property type="entry name" value="TRNASYNTHPRO"/>
</dbReference>
<dbReference type="SUPFAM" id="SSF52954">
    <property type="entry name" value="Class II aaRS ABD-related"/>
    <property type="match status" value="1"/>
</dbReference>
<dbReference type="SUPFAM" id="SSF55681">
    <property type="entry name" value="Class II aaRS and biotin synthetases"/>
    <property type="match status" value="1"/>
</dbReference>
<dbReference type="SUPFAM" id="SSF55826">
    <property type="entry name" value="YbaK/ProRS associated domain"/>
    <property type="match status" value="1"/>
</dbReference>
<dbReference type="PROSITE" id="PS50862">
    <property type="entry name" value="AA_TRNA_LIGASE_II"/>
    <property type="match status" value="1"/>
</dbReference>
<evidence type="ECO:0000255" key="1">
    <source>
        <dbReference type="HAMAP-Rule" id="MF_01569"/>
    </source>
</evidence>
<keyword id="KW-0030">Aminoacyl-tRNA synthetase</keyword>
<keyword id="KW-0067">ATP-binding</keyword>
<keyword id="KW-0963">Cytoplasm</keyword>
<keyword id="KW-0436">Ligase</keyword>
<keyword id="KW-0547">Nucleotide-binding</keyword>
<keyword id="KW-0648">Protein biosynthesis</keyword>
<reference key="1">
    <citation type="submission" date="2008-08" db="EMBL/GenBank/DDBJ databases">
        <title>Complete sequence of Anaeromyxobacter sp. K.</title>
        <authorList>
            <consortium name="US DOE Joint Genome Institute"/>
            <person name="Lucas S."/>
            <person name="Copeland A."/>
            <person name="Lapidus A."/>
            <person name="Glavina del Rio T."/>
            <person name="Dalin E."/>
            <person name="Tice H."/>
            <person name="Bruce D."/>
            <person name="Goodwin L."/>
            <person name="Pitluck S."/>
            <person name="Saunders E."/>
            <person name="Brettin T."/>
            <person name="Detter J.C."/>
            <person name="Han C."/>
            <person name="Larimer F."/>
            <person name="Land M."/>
            <person name="Hauser L."/>
            <person name="Kyrpides N."/>
            <person name="Ovchinnikiva G."/>
            <person name="Beliaev A."/>
        </authorList>
    </citation>
    <scope>NUCLEOTIDE SEQUENCE [LARGE SCALE GENOMIC DNA]</scope>
    <source>
        <strain>K</strain>
    </source>
</reference>
<protein>
    <recommendedName>
        <fullName evidence="1">Proline--tRNA ligase</fullName>
        <ecNumber evidence="1">6.1.1.15</ecNumber>
    </recommendedName>
    <alternativeName>
        <fullName evidence="1">Prolyl-tRNA synthetase</fullName>
        <shortName evidence="1">ProRS</shortName>
    </alternativeName>
</protein>
<gene>
    <name evidence="1" type="primary">proS</name>
    <name type="ordered locus">AnaeK_4057</name>
</gene>
<comment type="function">
    <text evidence="1">Catalyzes the attachment of proline to tRNA(Pro) in a two-step reaction: proline is first activated by ATP to form Pro-AMP and then transferred to the acceptor end of tRNA(Pro). As ProRS can inadvertently accommodate and process non-cognate amino acids such as alanine and cysteine, to avoid such errors it has two additional distinct editing activities against alanine. One activity is designated as 'pretransfer' editing and involves the tRNA(Pro)-independent hydrolysis of activated Ala-AMP. The other activity is designated 'posttransfer' editing and involves deacylation of mischarged Ala-tRNA(Pro). The misacylated Cys-tRNA(Pro) is not edited by ProRS.</text>
</comment>
<comment type="catalytic activity">
    <reaction evidence="1">
        <text>tRNA(Pro) + L-proline + ATP = L-prolyl-tRNA(Pro) + AMP + diphosphate</text>
        <dbReference type="Rhea" id="RHEA:14305"/>
        <dbReference type="Rhea" id="RHEA-COMP:9700"/>
        <dbReference type="Rhea" id="RHEA-COMP:9702"/>
        <dbReference type="ChEBI" id="CHEBI:30616"/>
        <dbReference type="ChEBI" id="CHEBI:33019"/>
        <dbReference type="ChEBI" id="CHEBI:60039"/>
        <dbReference type="ChEBI" id="CHEBI:78442"/>
        <dbReference type="ChEBI" id="CHEBI:78532"/>
        <dbReference type="ChEBI" id="CHEBI:456215"/>
        <dbReference type="EC" id="6.1.1.15"/>
    </reaction>
</comment>
<comment type="subunit">
    <text evidence="1">Homodimer.</text>
</comment>
<comment type="subcellular location">
    <subcellularLocation>
        <location evidence="1">Cytoplasm</location>
    </subcellularLocation>
</comment>
<comment type="domain">
    <text evidence="1">Consists of three domains: the N-terminal catalytic domain, the editing domain and the C-terminal anticodon-binding domain.</text>
</comment>
<comment type="similarity">
    <text evidence="1">Belongs to the class-II aminoacyl-tRNA synthetase family. ProS type 1 subfamily.</text>
</comment>
<organism>
    <name type="scientific">Anaeromyxobacter sp. (strain K)</name>
    <dbReference type="NCBI Taxonomy" id="447217"/>
    <lineage>
        <taxon>Bacteria</taxon>
        <taxon>Pseudomonadati</taxon>
        <taxon>Myxococcota</taxon>
        <taxon>Myxococcia</taxon>
        <taxon>Myxococcales</taxon>
        <taxon>Cystobacterineae</taxon>
        <taxon>Anaeromyxobacteraceae</taxon>
        <taxon>Anaeromyxobacter</taxon>
    </lineage>
</organism>
<sequence length="574" mass="62551">MHAVRYSQAFIPTLKEAPADAQVASHKLLVRAGFIRQLGAGIYDYLPLAKRSLAKVEAIVREEMDAIGGQEFYLPALHPAEIWKESGRWDVMGDNMFRLKDRKGGDYCLGMTHEEIFTAVARDELRSYRQLPQVWYQIQTKFRDEPRPKSGLLRVRQFTMKDAYSFDVDRAGLDRSYEDQRRAYEKIFTRCGLDFVAVQAHSGSMGGSESSEFMVRTEAGEDLVAACPRCRYAANTETATSRVAAEADGPGLGAPEKFATPGVVTIEALEQAPHSVPARRQLKTLVYMADEKPVIAVVRGDQELNEAKLQTATGAVAVRPAHPEEIPPLMGARAGSLGAVRFTRARVLVDPSLADRKDMVTGANEDGFHLRGVDVRRDVLAHGATLAELRTVKAGEGCPRCDGTLDVFKALEIGHIFKLGTKYSESMKATVLDAEGKQVPIVMGSYGIGVERILAAAIELHHDDNGIVFPMAIAPFHATVLTLGPEPELRKAAEEVVAALGKEGVEVLFDDRDERAGVKFKDADLLGIPIRIAVGKKGLAAGNVEWKLRKGGAVELVPVGEVARKAAEAVRAAT</sequence>